<protein>
    <recommendedName>
        <fullName>Acidic leucine-rich nuclear phosphoprotein 32-related protein 2</fullName>
    </recommendedName>
    <alternativeName>
        <fullName>ANP32/acidic nuclear phosphoprotein-like protein 2</fullName>
    </alternativeName>
</protein>
<gene>
    <name type="ordered locus">Os03g0668900</name>
    <name type="ordered locus">LOC_Os03g46600</name>
    <name evidence="3" type="ORF">OsJ_12028</name>
    <name type="ORF">OSJNBa0039O18.14</name>
    <name type="ORF">OSJNBb0036M02.2</name>
</gene>
<dbReference type="EMBL" id="AC133930">
    <property type="protein sequence ID" value="AAP44658.1"/>
    <property type="molecule type" value="Genomic_DNA"/>
</dbReference>
<dbReference type="EMBL" id="AC145388">
    <property type="protein sequence ID" value="AAU89139.1"/>
    <property type="molecule type" value="Genomic_DNA"/>
</dbReference>
<dbReference type="EMBL" id="DP000009">
    <property type="protein sequence ID" value="ABF98096.1"/>
    <property type="molecule type" value="Genomic_DNA"/>
</dbReference>
<dbReference type="EMBL" id="AP008209">
    <property type="protein sequence ID" value="BAF12774.1"/>
    <property type="molecule type" value="Genomic_DNA"/>
</dbReference>
<dbReference type="EMBL" id="AP014959">
    <property type="protein sequence ID" value="BAS85664.1"/>
    <property type="molecule type" value="Genomic_DNA"/>
</dbReference>
<dbReference type="EMBL" id="CM000140">
    <property type="protein sequence ID" value="EAZ28063.1"/>
    <property type="molecule type" value="Genomic_DNA"/>
</dbReference>
<dbReference type="EMBL" id="AK108369">
    <property type="protein sequence ID" value="BAG98386.1"/>
    <property type="molecule type" value="mRNA"/>
</dbReference>
<dbReference type="RefSeq" id="XP_015628874.1">
    <property type="nucleotide sequence ID" value="XM_015773388.1"/>
</dbReference>
<dbReference type="SMR" id="Q7Y180"/>
<dbReference type="FunCoup" id="Q7Y180">
    <property type="interactions" value="994"/>
</dbReference>
<dbReference type="STRING" id="39947.Q7Y180"/>
<dbReference type="PaxDb" id="39947-Q7Y180"/>
<dbReference type="EnsemblPlants" id="Os03t0668900-01">
    <property type="protein sequence ID" value="Os03t0668900-01"/>
    <property type="gene ID" value="Os03g0668900"/>
</dbReference>
<dbReference type="Gramene" id="Os03t0668900-01">
    <property type="protein sequence ID" value="Os03t0668900-01"/>
    <property type="gene ID" value="Os03g0668900"/>
</dbReference>
<dbReference type="KEGG" id="dosa:Os03g0668900"/>
<dbReference type="eggNOG" id="KOG2739">
    <property type="taxonomic scope" value="Eukaryota"/>
</dbReference>
<dbReference type="HOGENOM" id="CLU_063314_0_0_1"/>
<dbReference type="InParanoid" id="Q7Y180"/>
<dbReference type="OMA" id="VTNENAY"/>
<dbReference type="OrthoDB" id="2160613at2759"/>
<dbReference type="Proteomes" id="UP000000763">
    <property type="component" value="Chromosome 3"/>
</dbReference>
<dbReference type="Proteomes" id="UP000007752">
    <property type="component" value="Chromosome 3"/>
</dbReference>
<dbReference type="Proteomes" id="UP000059680">
    <property type="component" value="Chromosome 3"/>
</dbReference>
<dbReference type="GO" id="GO:0005634">
    <property type="term" value="C:nucleus"/>
    <property type="evidence" value="ECO:0000318"/>
    <property type="project" value="GO_Central"/>
</dbReference>
<dbReference type="GO" id="GO:0042393">
    <property type="term" value="F:histone binding"/>
    <property type="evidence" value="ECO:0000318"/>
    <property type="project" value="GO_Central"/>
</dbReference>
<dbReference type="FunFam" id="3.80.10.10:FF:000131">
    <property type="entry name" value="acidic leucine-rich nuclear phosphoprotein 32-related protein-like"/>
    <property type="match status" value="1"/>
</dbReference>
<dbReference type="Gene3D" id="3.80.10.10">
    <property type="entry name" value="Ribonuclease Inhibitor"/>
    <property type="match status" value="1"/>
</dbReference>
<dbReference type="InterPro" id="IPR045081">
    <property type="entry name" value="AN32"/>
</dbReference>
<dbReference type="InterPro" id="IPR001611">
    <property type="entry name" value="Leu-rich_rpt"/>
</dbReference>
<dbReference type="InterPro" id="IPR032675">
    <property type="entry name" value="LRR_dom_sf"/>
</dbReference>
<dbReference type="PANTHER" id="PTHR11375">
    <property type="entry name" value="ACIDIC LEUCINE-RICH NUCLEAR PHOSPHOPROTEIN 32"/>
    <property type="match status" value="1"/>
</dbReference>
<dbReference type="PANTHER" id="PTHR11375:SF18">
    <property type="entry name" value="ACIDIC LEUCINE-RICH NUCLEAR PHOSPHOPROTEIN 32-RELATED PROTEIN 2"/>
    <property type="match status" value="1"/>
</dbReference>
<dbReference type="SUPFAM" id="SSF52058">
    <property type="entry name" value="L domain-like"/>
    <property type="match status" value="1"/>
</dbReference>
<dbReference type="PROSITE" id="PS51450">
    <property type="entry name" value="LRR"/>
    <property type="match status" value="3"/>
</dbReference>
<proteinExistence type="evidence at transcript level"/>
<reference key="1">
    <citation type="journal article" date="2005" name="Genome Res.">
        <title>Sequence, annotation, and analysis of synteny between rice chromosome 3 and diverged grass species.</title>
        <authorList>
            <consortium name="The rice chromosome 3 sequencing consortium"/>
            <person name="Buell C.R."/>
            <person name="Yuan Q."/>
            <person name="Ouyang S."/>
            <person name="Liu J."/>
            <person name="Zhu W."/>
            <person name="Wang A."/>
            <person name="Maiti R."/>
            <person name="Haas B."/>
            <person name="Wortman J."/>
            <person name="Pertea M."/>
            <person name="Jones K.M."/>
            <person name="Kim M."/>
            <person name="Overton L."/>
            <person name="Tsitrin T."/>
            <person name="Fadrosh D."/>
            <person name="Bera J."/>
            <person name="Weaver B."/>
            <person name="Jin S."/>
            <person name="Johri S."/>
            <person name="Reardon M."/>
            <person name="Webb K."/>
            <person name="Hill J."/>
            <person name="Moffat K."/>
            <person name="Tallon L."/>
            <person name="Van Aken S."/>
            <person name="Lewis M."/>
            <person name="Utterback T."/>
            <person name="Feldblyum T."/>
            <person name="Zismann V."/>
            <person name="Iobst S."/>
            <person name="Hsiao J."/>
            <person name="de Vazeille A.R."/>
            <person name="Salzberg S.L."/>
            <person name="White O."/>
            <person name="Fraser C.M."/>
            <person name="Yu Y."/>
            <person name="Kim H."/>
            <person name="Rambo T."/>
            <person name="Currie J."/>
            <person name="Collura K."/>
            <person name="Kernodle-Thompson S."/>
            <person name="Wei F."/>
            <person name="Kudrna K."/>
            <person name="Ammiraju J.S.S."/>
            <person name="Luo M."/>
            <person name="Goicoechea J.L."/>
            <person name="Wing R.A."/>
            <person name="Henry D."/>
            <person name="Oates R."/>
            <person name="Palmer M."/>
            <person name="Pries G."/>
            <person name="Saski C."/>
            <person name="Simmons J."/>
            <person name="Soderlund C."/>
            <person name="Nelson W."/>
            <person name="de la Bastide M."/>
            <person name="Spiegel L."/>
            <person name="Nascimento L."/>
            <person name="Huang E."/>
            <person name="Preston R."/>
            <person name="Zutavern T."/>
            <person name="Palmer L."/>
            <person name="O'Shaughnessy A."/>
            <person name="Dike S."/>
            <person name="McCombie W.R."/>
            <person name="Minx P."/>
            <person name="Cordum H."/>
            <person name="Wilson R."/>
            <person name="Jin W."/>
            <person name="Lee H.R."/>
            <person name="Jiang J."/>
            <person name="Jackson S."/>
        </authorList>
    </citation>
    <scope>NUCLEOTIDE SEQUENCE [LARGE SCALE GENOMIC DNA]</scope>
    <source>
        <strain>cv. Nipponbare</strain>
    </source>
</reference>
<reference key="2">
    <citation type="journal article" date="2005" name="Nature">
        <title>The map-based sequence of the rice genome.</title>
        <authorList>
            <consortium name="International rice genome sequencing project (IRGSP)"/>
        </authorList>
    </citation>
    <scope>NUCLEOTIDE SEQUENCE [LARGE SCALE GENOMIC DNA]</scope>
    <source>
        <strain>cv. Nipponbare</strain>
    </source>
</reference>
<reference key="3">
    <citation type="journal article" date="2008" name="Nucleic Acids Res.">
        <title>The rice annotation project database (RAP-DB): 2008 update.</title>
        <authorList>
            <consortium name="The rice annotation project (RAP)"/>
        </authorList>
    </citation>
    <scope>GENOME REANNOTATION</scope>
    <source>
        <strain>cv. Nipponbare</strain>
    </source>
</reference>
<reference key="4">
    <citation type="journal article" date="2013" name="Rice">
        <title>Improvement of the Oryza sativa Nipponbare reference genome using next generation sequence and optical map data.</title>
        <authorList>
            <person name="Kawahara Y."/>
            <person name="de la Bastide M."/>
            <person name="Hamilton J.P."/>
            <person name="Kanamori H."/>
            <person name="McCombie W.R."/>
            <person name="Ouyang S."/>
            <person name="Schwartz D.C."/>
            <person name="Tanaka T."/>
            <person name="Wu J."/>
            <person name="Zhou S."/>
            <person name="Childs K.L."/>
            <person name="Davidson R.M."/>
            <person name="Lin H."/>
            <person name="Quesada-Ocampo L."/>
            <person name="Vaillancourt B."/>
            <person name="Sakai H."/>
            <person name="Lee S.S."/>
            <person name="Kim J."/>
            <person name="Numa H."/>
            <person name="Itoh T."/>
            <person name="Buell C.R."/>
            <person name="Matsumoto T."/>
        </authorList>
    </citation>
    <scope>GENOME REANNOTATION</scope>
    <source>
        <strain>cv. Nipponbare</strain>
    </source>
</reference>
<reference key="5">
    <citation type="journal article" date="2005" name="PLoS Biol.">
        <title>The genomes of Oryza sativa: a history of duplications.</title>
        <authorList>
            <person name="Yu J."/>
            <person name="Wang J."/>
            <person name="Lin W."/>
            <person name="Li S."/>
            <person name="Li H."/>
            <person name="Zhou J."/>
            <person name="Ni P."/>
            <person name="Dong W."/>
            <person name="Hu S."/>
            <person name="Zeng C."/>
            <person name="Zhang J."/>
            <person name="Zhang Y."/>
            <person name="Li R."/>
            <person name="Xu Z."/>
            <person name="Li S."/>
            <person name="Li X."/>
            <person name="Zheng H."/>
            <person name="Cong L."/>
            <person name="Lin L."/>
            <person name="Yin J."/>
            <person name="Geng J."/>
            <person name="Li G."/>
            <person name="Shi J."/>
            <person name="Liu J."/>
            <person name="Lv H."/>
            <person name="Li J."/>
            <person name="Wang J."/>
            <person name="Deng Y."/>
            <person name="Ran L."/>
            <person name="Shi X."/>
            <person name="Wang X."/>
            <person name="Wu Q."/>
            <person name="Li C."/>
            <person name="Ren X."/>
            <person name="Wang J."/>
            <person name="Wang X."/>
            <person name="Li D."/>
            <person name="Liu D."/>
            <person name="Zhang X."/>
            <person name="Ji Z."/>
            <person name="Zhao W."/>
            <person name="Sun Y."/>
            <person name="Zhang Z."/>
            <person name="Bao J."/>
            <person name="Han Y."/>
            <person name="Dong L."/>
            <person name="Ji J."/>
            <person name="Chen P."/>
            <person name="Wu S."/>
            <person name="Liu J."/>
            <person name="Xiao Y."/>
            <person name="Bu D."/>
            <person name="Tan J."/>
            <person name="Yang L."/>
            <person name="Ye C."/>
            <person name="Zhang J."/>
            <person name="Xu J."/>
            <person name="Zhou Y."/>
            <person name="Yu Y."/>
            <person name="Zhang B."/>
            <person name="Zhuang S."/>
            <person name="Wei H."/>
            <person name="Liu B."/>
            <person name="Lei M."/>
            <person name="Yu H."/>
            <person name="Li Y."/>
            <person name="Xu H."/>
            <person name="Wei S."/>
            <person name="He X."/>
            <person name="Fang L."/>
            <person name="Zhang Z."/>
            <person name="Zhang Y."/>
            <person name="Huang X."/>
            <person name="Su Z."/>
            <person name="Tong W."/>
            <person name="Li J."/>
            <person name="Tong Z."/>
            <person name="Li S."/>
            <person name="Ye J."/>
            <person name="Wang L."/>
            <person name="Fang L."/>
            <person name="Lei T."/>
            <person name="Chen C.-S."/>
            <person name="Chen H.-C."/>
            <person name="Xu Z."/>
            <person name="Li H."/>
            <person name="Huang H."/>
            <person name="Zhang F."/>
            <person name="Xu H."/>
            <person name="Li N."/>
            <person name="Zhao C."/>
            <person name="Li S."/>
            <person name="Dong L."/>
            <person name="Huang Y."/>
            <person name="Li L."/>
            <person name="Xi Y."/>
            <person name="Qi Q."/>
            <person name="Li W."/>
            <person name="Zhang B."/>
            <person name="Hu W."/>
            <person name="Zhang Y."/>
            <person name="Tian X."/>
            <person name="Jiao Y."/>
            <person name="Liang X."/>
            <person name="Jin J."/>
            <person name="Gao L."/>
            <person name="Zheng W."/>
            <person name="Hao B."/>
            <person name="Liu S.-M."/>
            <person name="Wang W."/>
            <person name="Yuan L."/>
            <person name="Cao M."/>
            <person name="McDermott J."/>
            <person name="Samudrala R."/>
            <person name="Wang J."/>
            <person name="Wong G.K.-S."/>
            <person name="Yang H."/>
        </authorList>
    </citation>
    <scope>NUCLEOTIDE SEQUENCE [LARGE SCALE GENOMIC DNA]</scope>
    <source>
        <strain>cv. Nipponbare</strain>
    </source>
</reference>
<reference key="6">
    <citation type="journal article" date="2003" name="Science">
        <title>Collection, mapping, and annotation of over 28,000 cDNA clones from japonica rice.</title>
        <authorList>
            <consortium name="The rice full-length cDNA consortium"/>
        </authorList>
    </citation>
    <scope>NUCLEOTIDE SEQUENCE [LARGE SCALE MRNA]</scope>
    <source>
        <strain>cv. Nipponbare</strain>
    </source>
</reference>
<reference key="7">
    <citation type="journal article" date="2005" name="Cerebellum">
        <title>The Anp32 family of proteins containing leucine-rich repeats.</title>
        <authorList>
            <person name="Matilla A."/>
            <person name="Radrizzani M."/>
        </authorList>
    </citation>
    <scope>GENE FAMILY</scope>
    <scope>NOMENCLATURE</scope>
</reference>
<name>AN322_ORYSJ</name>
<keyword id="KW-0433">Leucine-rich repeat</keyword>
<keyword id="KW-1185">Reference proteome</keyword>
<keyword id="KW-0677">Repeat</keyword>
<sequence>MADAAAPGEDDAAWERAIAAAVKNAPFSAPKTLTLDGAVKSTTGRLPSPSLLGRYPSLEELSVAGARLSSLAGLPRLPALRRLSLPDNRLSGAASLAAVAESCGATLRHLDLGNNRFADVAELAPLAPHGVESLDLYQCPVTKAKGYRDKVFALIPSLKFLDGMDAEGNDCLDSDDEEDEEEDEGEEGEGEGDEEEEEEGGEEGEGDEDDEEEGDEEEDEEEGEEEAEDEEDEAGADEEDESKVANGSKGSSGSAQPNKRKRDSEDDANGDN</sequence>
<evidence type="ECO:0000256" key="1">
    <source>
        <dbReference type="SAM" id="MobiDB-lite"/>
    </source>
</evidence>
<evidence type="ECO:0000305" key="2"/>
<evidence type="ECO:0000312" key="3">
    <source>
        <dbReference type="EMBL" id="EAZ28063.1"/>
    </source>
</evidence>
<accession>Q7Y180</accession>
<accession>A3AL74</accession>
<comment type="similarity">
    <text evidence="2">Belongs to the ANP32 family.</text>
</comment>
<feature type="chain" id="PRO_0000271364" description="Acidic leucine-rich nuclear phosphoprotein 32-related protein 2">
    <location>
        <begin position="1"/>
        <end position="272"/>
    </location>
</feature>
<feature type="repeat" description="LRR 1">
    <location>
        <begin position="57"/>
        <end position="78"/>
    </location>
</feature>
<feature type="repeat" description="LRR 2">
    <location>
        <begin position="79"/>
        <end position="100"/>
    </location>
</feature>
<feature type="repeat" description="LRR 3">
    <location>
        <begin position="106"/>
        <end position="127"/>
    </location>
</feature>
<feature type="domain" description="LRRCT">
    <location>
        <begin position="139"/>
        <end position="184"/>
    </location>
</feature>
<feature type="region of interest" description="Disordered" evidence="1">
    <location>
        <begin position="163"/>
        <end position="272"/>
    </location>
</feature>
<feature type="compositionally biased region" description="Acidic residues" evidence="1">
    <location>
        <begin position="164"/>
        <end position="241"/>
    </location>
</feature>
<feature type="compositionally biased region" description="Polar residues" evidence="1">
    <location>
        <begin position="248"/>
        <end position="257"/>
    </location>
</feature>
<organism>
    <name type="scientific">Oryza sativa subsp. japonica</name>
    <name type="common">Rice</name>
    <dbReference type="NCBI Taxonomy" id="39947"/>
    <lineage>
        <taxon>Eukaryota</taxon>
        <taxon>Viridiplantae</taxon>
        <taxon>Streptophyta</taxon>
        <taxon>Embryophyta</taxon>
        <taxon>Tracheophyta</taxon>
        <taxon>Spermatophyta</taxon>
        <taxon>Magnoliopsida</taxon>
        <taxon>Liliopsida</taxon>
        <taxon>Poales</taxon>
        <taxon>Poaceae</taxon>
        <taxon>BOP clade</taxon>
        <taxon>Oryzoideae</taxon>
        <taxon>Oryzeae</taxon>
        <taxon>Oryzinae</taxon>
        <taxon>Oryza</taxon>
        <taxon>Oryza sativa</taxon>
    </lineage>
</organism>